<dbReference type="EMBL" id="U31778">
    <property type="protein sequence ID" value="AAA79392.1"/>
    <property type="molecule type" value="Genomic_DNA"/>
</dbReference>
<dbReference type="Proteomes" id="UP000008230">
    <property type="component" value="Genome"/>
</dbReference>
<dbReference type="GO" id="GO:0043657">
    <property type="term" value="C:host cell"/>
    <property type="evidence" value="ECO:0007669"/>
    <property type="project" value="GOC"/>
</dbReference>
<dbReference type="GO" id="GO:0044174">
    <property type="term" value="C:host cell endosome"/>
    <property type="evidence" value="ECO:0007669"/>
    <property type="project" value="UniProtKB-KW"/>
</dbReference>
<dbReference type="GO" id="GO:0044177">
    <property type="term" value="C:host cell Golgi apparatus"/>
    <property type="evidence" value="ECO:0007669"/>
    <property type="project" value="UniProtKB-SubCell"/>
</dbReference>
<dbReference type="GO" id="GO:0042025">
    <property type="term" value="C:host cell nucleus"/>
    <property type="evidence" value="ECO:0007669"/>
    <property type="project" value="UniProtKB-SubCell"/>
</dbReference>
<dbReference type="GO" id="GO:0019028">
    <property type="term" value="C:viral capsid"/>
    <property type="evidence" value="ECO:0007669"/>
    <property type="project" value="UniProtKB-UniRule"/>
</dbReference>
<dbReference type="GO" id="GO:0003677">
    <property type="term" value="F:DNA binding"/>
    <property type="evidence" value="ECO:0007669"/>
    <property type="project" value="UniProtKB-UniRule"/>
</dbReference>
<dbReference type="GO" id="GO:0005198">
    <property type="term" value="F:structural molecule activity"/>
    <property type="evidence" value="ECO:0007669"/>
    <property type="project" value="UniProtKB-UniRule"/>
</dbReference>
<dbReference type="GO" id="GO:0075521">
    <property type="term" value="P:microtubule-dependent intracellular transport of viral material towards nucleus"/>
    <property type="evidence" value="ECO:0007669"/>
    <property type="project" value="UniProtKB-UniRule"/>
</dbReference>
<dbReference type="GO" id="GO:0046718">
    <property type="term" value="P:symbiont entry into host cell"/>
    <property type="evidence" value="ECO:0007669"/>
    <property type="project" value="UniProtKB-KW"/>
</dbReference>
<dbReference type="GO" id="GO:0075732">
    <property type="term" value="P:viral penetration into host nucleus"/>
    <property type="evidence" value="ECO:0007669"/>
    <property type="project" value="UniProtKB-KW"/>
</dbReference>
<dbReference type="HAMAP" id="MF_04003">
    <property type="entry name" value="PPV_L2"/>
    <property type="match status" value="1"/>
</dbReference>
<dbReference type="InterPro" id="IPR000784">
    <property type="entry name" value="Late_L2"/>
</dbReference>
<dbReference type="Pfam" id="PF00513">
    <property type="entry name" value="Late_protein_L2"/>
    <property type="match status" value="1"/>
</dbReference>
<organism>
    <name type="scientific">Human papillomavirus 20</name>
    <dbReference type="NCBI Taxonomy" id="31547"/>
    <lineage>
        <taxon>Viruses</taxon>
        <taxon>Monodnaviria</taxon>
        <taxon>Shotokuvirae</taxon>
        <taxon>Cossaviricota</taxon>
        <taxon>Papovaviricetes</taxon>
        <taxon>Zurhausenvirales</taxon>
        <taxon>Papillomaviridae</taxon>
        <taxon>Firstpapillomavirinae</taxon>
        <taxon>Betapapillomavirus</taxon>
        <taxon>Betapapillomavirus 1</taxon>
    </lineage>
</organism>
<gene>
    <name evidence="1" type="primary">L2</name>
</gene>
<sequence length="518" mass="56745">MARAKRVKRDSATNIYRTCKQAGTCPPDVINKVESTTIADKILQYGSAGVFFGGLGISTGKGTGGTTGYVPLGEGPSVRVGGTPTVIRPALVPDTIGPSDIIPVDTLNPVEPSTSSIVPLTESTGPDLLPGEVETIAEIHPGPSRPPTDTPVTSTTSGSSAVLEVAPEPTPPARVRVSRTQYHNPSFQIITESTPTLGESSLADHIVVTSGSGGQAIGGMTPELIELQDFPSRYSFEIEEPTPPRRTSTPMQRLQNVFRRRGGLTNRRLVQQVPVDNPLFLTQPSRLVRFQFDNPVFEEEVTQIFEQDLDTFNEPPDRDFLDVQSLGRPQYSETPAGYVRVSRAGQRRTIRTRSGAQIGSQVHFYRDLSSIDTEDPIELQLLGQHSGDATIVQGPVESTFVDINVDENPLSEISAYSDDLLLDEANEDFSGSQLVVGGRRSTSTYTVPHFETTRSSSYYVQDTKGYYVAYPEDRDVSKDIIYPNPDLPVVIIHTYDTSGDFYLHPSLTKRLKRKRKYL</sequence>
<organismHost>
    <name type="scientific">Homo sapiens</name>
    <name type="common">Human</name>
    <dbReference type="NCBI Taxonomy" id="9606"/>
</organismHost>
<proteinExistence type="inferred from homology"/>
<accession>P50794</accession>
<name>VL2_HPV20</name>
<reference key="1">
    <citation type="submission" date="1995-10" db="EMBL/GenBank/DDBJ databases">
        <authorList>
            <person name="Delius H."/>
        </authorList>
    </citation>
    <scope>NUCLEOTIDE SEQUENCE [GENOMIC DNA]</scope>
</reference>
<feature type="chain" id="PRO_0000133587" description="Minor capsid protein L2">
    <location>
        <begin position="1"/>
        <end position="518"/>
    </location>
</feature>
<feature type="region of interest" description="Disordered" evidence="2">
    <location>
        <begin position="139"/>
        <end position="173"/>
    </location>
</feature>
<feature type="short sequence motif" description="Nuclear localization signal" evidence="1">
    <location>
        <begin position="1"/>
        <end position="10"/>
    </location>
</feature>
<feature type="short sequence motif" description="Nuclear localization signal" evidence="1">
    <location>
        <begin position="509"/>
        <end position="517"/>
    </location>
</feature>
<feature type="compositionally biased region" description="Low complexity" evidence="2">
    <location>
        <begin position="150"/>
        <end position="160"/>
    </location>
</feature>
<feature type="disulfide bond" evidence="1">
    <location>
        <begin position="19"/>
        <end position="25"/>
    </location>
</feature>
<evidence type="ECO:0000255" key="1">
    <source>
        <dbReference type="HAMAP-Rule" id="MF_04003"/>
    </source>
</evidence>
<evidence type="ECO:0000256" key="2">
    <source>
        <dbReference type="SAM" id="MobiDB-lite"/>
    </source>
</evidence>
<keyword id="KW-0167">Capsid protein</keyword>
<keyword id="KW-1176">Cytoplasmic inwards viral transport</keyword>
<keyword id="KW-1015">Disulfide bond</keyword>
<keyword id="KW-0238">DNA-binding</keyword>
<keyword id="KW-1039">Host endosome</keyword>
<keyword id="KW-1040">Host Golgi apparatus</keyword>
<keyword id="KW-1048">Host nucleus</keyword>
<keyword id="KW-0945">Host-virus interaction</keyword>
<keyword id="KW-0426">Late protein</keyword>
<keyword id="KW-1177">Microtubular inwards viral transport</keyword>
<keyword id="KW-0597">Phosphoprotein</keyword>
<keyword id="KW-1163">Viral penetration into host nucleus</keyword>
<keyword id="KW-0946">Virion</keyword>
<keyword id="KW-1160">Virus entry into host cell</keyword>
<protein>
    <recommendedName>
        <fullName evidence="1">Minor capsid protein L2</fullName>
    </recommendedName>
</protein>
<comment type="function">
    <text evidence="1">Minor protein of the capsid that localizes along the inner surface of the virion, within the central cavities beneath the L1 pentamers. Plays a role in capsid stabilization through interaction with the major capsid protein L1. Once the virion enters the host cell, L2 escorts the genomic DNA into the nucleus by promoting escape from the endosomal compartments and traffic through the host Golgi network. Mechanistically, the C-terminus of L2 possesses a cell-penetrating peptide that protudes from the host endosome, interacts with host cytoplasmic retromer cargo and thereby mediates the capsid delivery to the host trans-Golgi network. Plays a role through its interaction with host dynein in the intracellular microtubule-dependent transport of viral capsid toward the nucleus. Mediates the viral genome import into the nucleus through binding to host importins. Once within the nucleus, L2 localizes viral genomes to host PML bodies in order to activate early gene expression for establishment of infection. Later on, promotes late gene expression by interacting with the viral E2 protein and by inhibiting its transcriptional activation functions. During virion assembly, encapsidates the genome by direct interaction with the viral DNA.</text>
</comment>
<comment type="subunit">
    <text evidence="1">Interacts with major capsid protein L1. Interacts with E2; this interaction inhibits E2 transcriptional activity but not the DNA replication function E2. Interacts with host GADD45GIP1. Interacts with host HSPA8; this interaction is required for L2 nuclear translocation. Interacts with host importins KPNB2 and KPNB3. Forms a complex with importin alpha2-beta1 heterodimers via interaction with the importin alpha2 adapter. Interacts with host DYNLT1; this interaction is essential for virus intracellular transport during entry. Interacts (via C-terminus) with host retromer subunits VPS35 and VPS29.</text>
</comment>
<comment type="subcellular location">
    <subcellularLocation>
        <location evidence="1">Virion</location>
    </subcellularLocation>
    <subcellularLocation>
        <location evidence="1">Host nucleus</location>
    </subcellularLocation>
    <subcellularLocation>
        <location evidence="1">Host early endosome</location>
    </subcellularLocation>
    <subcellularLocation>
        <location evidence="1">Host Golgi apparatus</location>
    </subcellularLocation>
</comment>
<comment type="PTM">
    <text evidence="1">Highly phosphorylated.</text>
</comment>
<comment type="similarity">
    <text evidence="1">Belongs to the papillomaviridae L2 protein family.</text>
</comment>